<protein>
    <recommendedName>
        <fullName>Probable sensor protein PcoS</fullName>
        <ecNumber>2.7.13.3</ecNumber>
    </recommendedName>
</protein>
<comment type="function">
    <text>Probable member of a two-component regulatory system PcoS/PcoR. May activate PcoR by phosphorylation.</text>
</comment>
<comment type="catalytic activity">
    <reaction>
        <text>ATP + protein L-histidine = ADP + protein N-phospho-L-histidine.</text>
        <dbReference type="EC" id="2.7.13.3"/>
    </reaction>
</comment>
<comment type="subcellular location">
    <subcellularLocation>
        <location evidence="4">Cell inner membrane</location>
        <topology evidence="4">Multi-pass membrane protein</topology>
    </subcellularLocation>
</comment>
<geneLocation type="plasmid">
    <name>pRJ1004</name>
</geneLocation>
<gene>
    <name type="primary">pcoS</name>
</gene>
<reference key="1">
    <citation type="journal article" date="1995" name="Mol. Microbiol.">
        <title>Molecular genetics and transport analysis of the copper-resistance determinant (pco) from Escherichia coli plasmid pRJ1004.</title>
        <authorList>
            <person name="Brown N.L."/>
            <person name="Barrett S.R."/>
            <person name="Camakaris J."/>
            <person name="Lee B.T.O."/>
            <person name="Rouch D.A."/>
        </authorList>
    </citation>
    <scope>NUCLEOTIDE SEQUENCE [GENOMIC DNA]</scope>
    <source>
        <strain>RJ97</strain>
    </source>
</reference>
<name>PCOS_ECOLX</name>
<keyword id="KW-0067">ATP-binding</keyword>
<keyword id="KW-0997">Cell inner membrane</keyword>
<keyword id="KW-1003">Cell membrane</keyword>
<keyword id="KW-0186">Copper</keyword>
<keyword id="KW-0418">Kinase</keyword>
<keyword id="KW-0472">Membrane</keyword>
<keyword id="KW-0547">Nucleotide-binding</keyword>
<keyword id="KW-0597">Phosphoprotein</keyword>
<keyword id="KW-0614">Plasmid</keyword>
<keyword id="KW-0808">Transferase</keyword>
<keyword id="KW-0812">Transmembrane</keyword>
<keyword id="KW-1133">Transmembrane helix</keyword>
<keyword id="KW-0902">Two-component regulatory system</keyword>
<sequence>MRFKISLTTRLSLIFSAVMLTVWWLSSFILISTLNDYFDNQDRDFLTGKLQLTEEFLKTETFRNKTDIKSLSEKINDAMVGHNGLFISIKNMENEKIVELYAKNSVVPAVLLNKSGDILDYMIQTEENNTVYRSISRRVAVTPEQGKSKHVIITVATDTGYHTLLMDKLSTWLFWFNIGLVFISVFLGWLTTRIGLKPLREMTSLASSMTVHSLDQRLNPDLAPPEISETMQEFNNMFDRLEGAFRKLSDFSSDIAHELRTPVSNLMMQTQFALAKERDVSHYREILFANLEELKRLSRMTSDMLFLARSEHGLLRLDKHDVDLAAELNELRELFEPLADETGKTITVEGEGVVAGDSDMLRRAFSNLLSNAIKYSPDNTCTAIHLERDSDCVNVMITNTMSGQVPANLERLFDRFYRADSSRFYNTEGAGLGLSITRSIIHAHGGELSAEQQGREIVFKVRLLMD</sequence>
<organism>
    <name type="scientific">Escherichia coli</name>
    <dbReference type="NCBI Taxonomy" id="562"/>
    <lineage>
        <taxon>Bacteria</taxon>
        <taxon>Pseudomonadati</taxon>
        <taxon>Pseudomonadota</taxon>
        <taxon>Gammaproteobacteria</taxon>
        <taxon>Enterobacterales</taxon>
        <taxon>Enterobacteriaceae</taxon>
        <taxon>Escherichia</taxon>
    </lineage>
</organism>
<dbReference type="EC" id="2.7.13.3"/>
<dbReference type="EMBL" id="X83541">
    <property type="protein sequence ID" value="CAA58530.1"/>
    <property type="molecule type" value="Genomic_DNA"/>
</dbReference>
<dbReference type="PIR" id="S70165">
    <property type="entry name" value="S52258"/>
</dbReference>
<dbReference type="SMR" id="Q47457"/>
<dbReference type="eggNOG" id="COG2205">
    <property type="taxonomic scope" value="Bacteria"/>
</dbReference>
<dbReference type="GO" id="GO:0005886">
    <property type="term" value="C:plasma membrane"/>
    <property type="evidence" value="ECO:0007669"/>
    <property type="project" value="UniProtKB-SubCell"/>
</dbReference>
<dbReference type="GO" id="GO:0005524">
    <property type="term" value="F:ATP binding"/>
    <property type="evidence" value="ECO:0007669"/>
    <property type="project" value="UniProtKB-KW"/>
</dbReference>
<dbReference type="GO" id="GO:0000155">
    <property type="term" value="F:phosphorelay sensor kinase activity"/>
    <property type="evidence" value="ECO:0007669"/>
    <property type="project" value="InterPro"/>
</dbReference>
<dbReference type="CDD" id="cd06225">
    <property type="entry name" value="HAMP"/>
    <property type="match status" value="1"/>
</dbReference>
<dbReference type="CDD" id="cd16923">
    <property type="entry name" value="HATPase_VanS-like"/>
    <property type="match status" value="1"/>
</dbReference>
<dbReference type="CDD" id="cd00082">
    <property type="entry name" value="HisKA"/>
    <property type="match status" value="1"/>
</dbReference>
<dbReference type="Gene3D" id="1.10.287.130">
    <property type="match status" value="1"/>
</dbReference>
<dbReference type="Gene3D" id="6.10.340.10">
    <property type="match status" value="1"/>
</dbReference>
<dbReference type="Gene3D" id="3.30.565.10">
    <property type="entry name" value="Histidine kinase-like ATPase, C-terminal domain"/>
    <property type="match status" value="1"/>
</dbReference>
<dbReference type="InterPro" id="IPR048590">
    <property type="entry name" value="CusS-like_sensor"/>
</dbReference>
<dbReference type="InterPro" id="IPR006290">
    <property type="entry name" value="CztS_silS_copS"/>
</dbReference>
<dbReference type="InterPro" id="IPR003660">
    <property type="entry name" value="HAMP_dom"/>
</dbReference>
<dbReference type="InterPro" id="IPR036890">
    <property type="entry name" value="HATPase_C_sf"/>
</dbReference>
<dbReference type="InterPro" id="IPR005467">
    <property type="entry name" value="His_kinase_dom"/>
</dbReference>
<dbReference type="InterPro" id="IPR003661">
    <property type="entry name" value="HisK_dim/P_dom"/>
</dbReference>
<dbReference type="InterPro" id="IPR036097">
    <property type="entry name" value="HisK_dim/P_sf"/>
</dbReference>
<dbReference type="InterPro" id="IPR004358">
    <property type="entry name" value="Sig_transdc_His_kin-like_C"/>
</dbReference>
<dbReference type="InterPro" id="IPR050428">
    <property type="entry name" value="TCS_sensor_his_kinase"/>
</dbReference>
<dbReference type="NCBIfam" id="TIGR01386">
    <property type="entry name" value="cztS_silS_copS"/>
    <property type="match status" value="1"/>
</dbReference>
<dbReference type="PANTHER" id="PTHR45436:SF15">
    <property type="entry name" value="SENSOR HISTIDINE KINASE CUSS"/>
    <property type="match status" value="1"/>
</dbReference>
<dbReference type="PANTHER" id="PTHR45436">
    <property type="entry name" value="SENSOR HISTIDINE KINASE YKOH"/>
    <property type="match status" value="1"/>
</dbReference>
<dbReference type="Pfam" id="PF21085">
    <property type="entry name" value="CusS"/>
    <property type="match status" value="1"/>
</dbReference>
<dbReference type="Pfam" id="PF00672">
    <property type="entry name" value="HAMP"/>
    <property type="match status" value="1"/>
</dbReference>
<dbReference type="Pfam" id="PF02518">
    <property type="entry name" value="HATPase_c"/>
    <property type="match status" value="1"/>
</dbReference>
<dbReference type="Pfam" id="PF00512">
    <property type="entry name" value="HisKA"/>
    <property type="match status" value="1"/>
</dbReference>
<dbReference type="PRINTS" id="PR00344">
    <property type="entry name" value="BCTRLSENSOR"/>
</dbReference>
<dbReference type="SMART" id="SM00304">
    <property type="entry name" value="HAMP"/>
    <property type="match status" value="1"/>
</dbReference>
<dbReference type="SMART" id="SM00387">
    <property type="entry name" value="HATPase_c"/>
    <property type="match status" value="1"/>
</dbReference>
<dbReference type="SMART" id="SM00388">
    <property type="entry name" value="HisKA"/>
    <property type="match status" value="1"/>
</dbReference>
<dbReference type="SUPFAM" id="SSF55874">
    <property type="entry name" value="ATPase domain of HSP90 chaperone/DNA topoisomerase II/histidine kinase"/>
    <property type="match status" value="1"/>
</dbReference>
<dbReference type="SUPFAM" id="SSF47384">
    <property type="entry name" value="Homodimeric domain of signal transducing histidine kinase"/>
    <property type="match status" value="1"/>
</dbReference>
<dbReference type="PROSITE" id="PS50885">
    <property type="entry name" value="HAMP"/>
    <property type="match status" value="1"/>
</dbReference>
<dbReference type="PROSITE" id="PS50109">
    <property type="entry name" value="HIS_KIN"/>
    <property type="match status" value="1"/>
</dbReference>
<evidence type="ECO:0000255" key="1"/>
<evidence type="ECO:0000255" key="2">
    <source>
        <dbReference type="PROSITE-ProRule" id="PRU00102"/>
    </source>
</evidence>
<evidence type="ECO:0000255" key="3">
    <source>
        <dbReference type="PROSITE-ProRule" id="PRU00107"/>
    </source>
</evidence>
<evidence type="ECO:0000305" key="4"/>
<proteinExistence type="inferred from homology"/>
<feature type="chain" id="PRO_0000074738" description="Probable sensor protein PcoS">
    <location>
        <begin position="1"/>
        <end position="466"/>
    </location>
</feature>
<feature type="topological domain" description="Cytoplasmic" evidence="1">
    <location>
        <begin position="1"/>
        <end position="10"/>
    </location>
</feature>
<feature type="transmembrane region" description="Helical" evidence="1">
    <location>
        <begin position="11"/>
        <end position="31"/>
    </location>
</feature>
<feature type="topological domain" description="Periplasmic" evidence="1">
    <location>
        <begin position="32"/>
        <end position="171"/>
    </location>
</feature>
<feature type="transmembrane region" description="Helical" evidence="1">
    <location>
        <begin position="172"/>
        <end position="192"/>
    </location>
</feature>
<feature type="topological domain" description="Cytoplasmic" evidence="1">
    <location>
        <begin position="193"/>
        <end position="466"/>
    </location>
</feature>
<feature type="domain" description="HAMP" evidence="2">
    <location>
        <begin position="193"/>
        <end position="246"/>
    </location>
</feature>
<feature type="domain" description="Histidine kinase" evidence="3">
    <location>
        <begin position="254"/>
        <end position="466"/>
    </location>
</feature>
<feature type="modified residue" description="Phosphohistidine; by autocatalysis" evidence="3">
    <location>
        <position position="257"/>
    </location>
</feature>
<accession>Q47457</accession>